<evidence type="ECO:0000255" key="1"/>
<evidence type="ECO:0000255" key="2">
    <source>
        <dbReference type="PROSITE-ProRule" id="PRU00027"/>
    </source>
</evidence>
<evidence type="ECO:0000256" key="3">
    <source>
        <dbReference type="SAM" id="MobiDB-lite"/>
    </source>
</evidence>
<evidence type="ECO:0000269" key="4">
    <source>
    </source>
</evidence>
<evidence type="ECO:0000269" key="5">
    <source>
    </source>
</evidence>
<evidence type="ECO:0000269" key="6">
    <source>
    </source>
</evidence>
<evidence type="ECO:0000305" key="7"/>
<feature type="chain" id="PRO_0000270928" description="Vacuolar import and degradation protein 22">
    <location>
        <begin position="1"/>
        <end position="901"/>
    </location>
</feature>
<feature type="transmembrane region" description="Helical" evidence="1">
    <location>
        <begin position="381"/>
        <end position="401"/>
    </location>
</feature>
<feature type="zinc finger region" description="BED-type" evidence="2">
    <location>
        <begin position="66"/>
        <end position="122"/>
    </location>
</feature>
<feature type="region of interest" description="Disordered" evidence="3">
    <location>
        <begin position="1"/>
        <end position="54"/>
    </location>
</feature>
<feature type="region of interest" description="Disordered" evidence="3">
    <location>
        <begin position="646"/>
        <end position="727"/>
    </location>
</feature>
<feature type="compositionally biased region" description="Polar residues" evidence="3">
    <location>
        <begin position="1"/>
        <end position="10"/>
    </location>
</feature>
<feature type="compositionally biased region" description="Low complexity" evidence="3">
    <location>
        <begin position="27"/>
        <end position="37"/>
    </location>
</feature>
<feature type="compositionally biased region" description="Low complexity" evidence="3">
    <location>
        <begin position="646"/>
        <end position="677"/>
    </location>
</feature>
<feature type="compositionally biased region" description="Basic and acidic residues" evidence="3">
    <location>
        <begin position="679"/>
        <end position="688"/>
    </location>
</feature>
<feature type="compositionally biased region" description="Low complexity" evidence="3">
    <location>
        <begin position="718"/>
        <end position="727"/>
    </location>
</feature>
<feature type="binding site" evidence="2">
    <location>
        <position position="87"/>
    </location>
    <ligand>
        <name>Zn(2+)</name>
        <dbReference type="ChEBI" id="CHEBI:29105"/>
    </ligand>
</feature>
<feature type="binding site" evidence="2">
    <location>
        <position position="90"/>
    </location>
    <ligand>
        <name>Zn(2+)</name>
        <dbReference type="ChEBI" id="CHEBI:29105"/>
    </ligand>
</feature>
<feature type="binding site" evidence="2">
    <location>
        <position position="110"/>
    </location>
    <ligand>
        <name>Zn(2+)</name>
        <dbReference type="ChEBI" id="CHEBI:29105"/>
    </ligand>
</feature>
<feature type="binding site" evidence="2">
    <location>
        <position position="115"/>
    </location>
    <ligand>
        <name>Zn(2+)</name>
        <dbReference type="ChEBI" id="CHEBI:29105"/>
    </ligand>
</feature>
<feature type="glycosylation site" description="N-linked (GlcNAc...) asparagine" evidence="1">
    <location>
        <position position="21"/>
    </location>
</feature>
<feature type="glycosylation site" description="N-linked (GlcNAc...) asparagine" evidence="1">
    <location>
        <position position="242"/>
    </location>
</feature>
<feature type="glycosylation site" description="N-linked (GlcNAc...) asparagine" evidence="1">
    <location>
        <position position="291"/>
    </location>
</feature>
<feature type="glycosylation site" description="N-linked (GlcNAc...) asparagine" evidence="1">
    <location>
        <position position="540"/>
    </location>
</feature>
<feature type="glycosylation site" description="N-linked (GlcNAc...) asparagine" evidence="1">
    <location>
        <position position="645"/>
    </location>
</feature>
<feature type="glycosylation site" description="N-linked (GlcNAc...) asparagine" evidence="1">
    <location>
        <position position="649"/>
    </location>
</feature>
<feature type="glycosylation site" description="N-linked (GlcNAc...) asparagine" evidence="1">
    <location>
        <position position="652"/>
    </location>
</feature>
<feature type="glycosylation site" description="N-linked (GlcNAc...) asparagine" evidence="1">
    <location>
        <position position="662"/>
    </location>
</feature>
<feature type="glycosylation site" description="N-linked (GlcNAc...) asparagine" evidence="1">
    <location>
        <position position="669"/>
    </location>
</feature>
<feature type="glycosylation site" description="N-linked (GlcNAc...) asparagine" evidence="1">
    <location>
        <position position="673"/>
    </location>
</feature>
<feature type="glycosylation site" description="N-linked (GlcNAc...) asparagine" evidence="1">
    <location>
        <position position="688"/>
    </location>
</feature>
<feature type="glycosylation site" description="N-linked (GlcNAc...) asparagine" evidence="1">
    <location>
        <position position="722"/>
    </location>
</feature>
<gene>
    <name type="primary">VID22</name>
    <name type="ordered locus">YLR373C</name>
</gene>
<name>VID22_YEAST</name>
<dbReference type="EMBL" id="U19103">
    <property type="protein sequence ID" value="AAB67577.1"/>
    <property type="molecule type" value="Genomic_DNA"/>
</dbReference>
<dbReference type="EMBL" id="BK006945">
    <property type="protein sequence ID" value="DAA09676.1"/>
    <property type="molecule type" value="Genomic_DNA"/>
</dbReference>
<dbReference type="PIR" id="S51391">
    <property type="entry name" value="S51391"/>
</dbReference>
<dbReference type="RefSeq" id="NP_013477.1">
    <property type="nucleotide sequence ID" value="NM_001182262.1"/>
</dbReference>
<dbReference type="BioGRID" id="31633">
    <property type="interactions" value="429"/>
</dbReference>
<dbReference type="DIP" id="DIP-4650N"/>
<dbReference type="FunCoup" id="Q05934">
    <property type="interactions" value="137"/>
</dbReference>
<dbReference type="IntAct" id="Q05934">
    <property type="interactions" value="11"/>
</dbReference>
<dbReference type="MINT" id="Q05934"/>
<dbReference type="STRING" id="4932.YLR373C"/>
<dbReference type="GlyCosmos" id="Q05934">
    <property type="glycosylation" value="12 sites, No reported glycans"/>
</dbReference>
<dbReference type="GlyGen" id="Q05934">
    <property type="glycosylation" value="12 sites"/>
</dbReference>
<dbReference type="iPTMnet" id="Q05934"/>
<dbReference type="PaxDb" id="4932-YLR373C"/>
<dbReference type="PeptideAtlas" id="Q05934"/>
<dbReference type="EnsemblFungi" id="YLR373C_mRNA">
    <property type="protein sequence ID" value="YLR373C"/>
    <property type="gene ID" value="YLR373C"/>
</dbReference>
<dbReference type="GeneID" id="851088"/>
<dbReference type="KEGG" id="sce:YLR373C"/>
<dbReference type="AGR" id="SGD:S000004365"/>
<dbReference type="SGD" id="S000004365">
    <property type="gene designation" value="VID22"/>
</dbReference>
<dbReference type="VEuPathDB" id="FungiDB:YLR373C"/>
<dbReference type="eggNOG" id="ENOG502RKC9">
    <property type="taxonomic scope" value="Eukaryota"/>
</dbReference>
<dbReference type="GeneTree" id="ENSGT00940000176412"/>
<dbReference type="HOGENOM" id="CLU_008135_0_0_1"/>
<dbReference type="InParanoid" id="Q05934"/>
<dbReference type="OMA" id="MNLLAMF"/>
<dbReference type="OrthoDB" id="4068423at2759"/>
<dbReference type="BioCyc" id="YEAST:G3O-32442-MONOMER"/>
<dbReference type="BioGRID-ORCS" id="851088">
    <property type="hits" value="0 hits in 10 CRISPR screens"/>
</dbReference>
<dbReference type="PRO" id="PR:Q05934"/>
<dbReference type="Proteomes" id="UP000002311">
    <property type="component" value="Chromosome XII"/>
</dbReference>
<dbReference type="RNAct" id="Q05934">
    <property type="molecule type" value="protein"/>
</dbReference>
<dbReference type="GO" id="GO:0005634">
    <property type="term" value="C:nucleus"/>
    <property type="evidence" value="ECO:0000314"/>
    <property type="project" value="SGD"/>
</dbReference>
<dbReference type="GO" id="GO:0005886">
    <property type="term" value="C:plasma membrane"/>
    <property type="evidence" value="ECO:0000314"/>
    <property type="project" value="SGD"/>
</dbReference>
<dbReference type="GO" id="GO:0005773">
    <property type="term" value="C:vacuole"/>
    <property type="evidence" value="ECO:0007669"/>
    <property type="project" value="GOC"/>
</dbReference>
<dbReference type="GO" id="GO:0051880">
    <property type="term" value="F:G-quadruplex DNA binding"/>
    <property type="evidence" value="ECO:0000314"/>
    <property type="project" value="SGD"/>
</dbReference>
<dbReference type="GO" id="GO:0008270">
    <property type="term" value="F:zinc ion binding"/>
    <property type="evidence" value="ECO:0007669"/>
    <property type="project" value="UniProtKB-KW"/>
</dbReference>
<dbReference type="GO" id="GO:0006338">
    <property type="term" value="P:chromatin remodeling"/>
    <property type="evidence" value="ECO:0000315"/>
    <property type="project" value="SGD"/>
</dbReference>
<dbReference type="GO" id="GO:0007039">
    <property type="term" value="P:protein catabolic process in the vacuole"/>
    <property type="evidence" value="ECO:0000315"/>
    <property type="project" value="SGD"/>
</dbReference>
<dbReference type="GO" id="GO:0015031">
    <property type="term" value="P:protein transport"/>
    <property type="evidence" value="ECO:0007669"/>
    <property type="project" value="UniProtKB-KW"/>
</dbReference>
<dbReference type="InterPro" id="IPR012337">
    <property type="entry name" value="RNaseH-like_sf"/>
</dbReference>
<dbReference type="InterPro" id="IPR052884">
    <property type="entry name" value="VID_Regulator"/>
</dbReference>
<dbReference type="InterPro" id="IPR003656">
    <property type="entry name" value="Znf_BED"/>
</dbReference>
<dbReference type="PANTHER" id="PTHR35261">
    <property type="entry name" value="ORGANELLAR PROTEIN, PUTATIVE-RELATED-RELATED"/>
    <property type="match status" value="1"/>
</dbReference>
<dbReference type="PANTHER" id="PTHR35261:SF3">
    <property type="entry name" value="VACUOLAR IMPORT AND DEGRADATION PROTEIN 22"/>
    <property type="match status" value="1"/>
</dbReference>
<dbReference type="SUPFAM" id="SSF53098">
    <property type="entry name" value="Ribonuclease H-like"/>
    <property type="match status" value="1"/>
</dbReference>
<dbReference type="PROSITE" id="PS50808">
    <property type="entry name" value="ZF_BED"/>
    <property type="match status" value="1"/>
</dbReference>
<reference key="1">
    <citation type="journal article" date="1997" name="Nature">
        <title>The nucleotide sequence of Saccharomyces cerevisiae chromosome XII.</title>
        <authorList>
            <person name="Johnston M."/>
            <person name="Hillier L.W."/>
            <person name="Riles L."/>
            <person name="Albermann K."/>
            <person name="Andre B."/>
            <person name="Ansorge W."/>
            <person name="Benes V."/>
            <person name="Brueckner M."/>
            <person name="Delius H."/>
            <person name="Dubois E."/>
            <person name="Duesterhoeft A."/>
            <person name="Entian K.-D."/>
            <person name="Floeth M."/>
            <person name="Goffeau A."/>
            <person name="Hebling U."/>
            <person name="Heumann K."/>
            <person name="Heuss-Neitzel D."/>
            <person name="Hilbert H."/>
            <person name="Hilger F."/>
            <person name="Kleine K."/>
            <person name="Koetter P."/>
            <person name="Louis E.J."/>
            <person name="Messenguy F."/>
            <person name="Mewes H.-W."/>
            <person name="Miosga T."/>
            <person name="Moestl D."/>
            <person name="Mueller-Auer S."/>
            <person name="Nentwich U."/>
            <person name="Obermaier B."/>
            <person name="Piravandi E."/>
            <person name="Pohl T.M."/>
            <person name="Portetelle D."/>
            <person name="Purnelle B."/>
            <person name="Rechmann S."/>
            <person name="Rieger M."/>
            <person name="Rinke M."/>
            <person name="Rose M."/>
            <person name="Scharfe M."/>
            <person name="Scherens B."/>
            <person name="Scholler P."/>
            <person name="Schwager C."/>
            <person name="Schwarz S."/>
            <person name="Underwood A.P."/>
            <person name="Urrestarazu L.A."/>
            <person name="Vandenbol M."/>
            <person name="Verhasselt P."/>
            <person name="Vierendeels F."/>
            <person name="Voet M."/>
            <person name="Volckaert G."/>
            <person name="Voss H."/>
            <person name="Wambutt R."/>
            <person name="Wedler E."/>
            <person name="Wedler H."/>
            <person name="Zimmermann F.K."/>
            <person name="Zollner A."/>
            <person name="Hani J."/>
            <person name="Hoheisel J.D."/>
        </authorList>
    </citation>
    <scope>NUCLEOTIDE SEQUENCE [LARGE SCALE GENOMIC DNA]</scope>
    <source>
        <strain>ATCC 204508 / S288c</strain>
    </source>
</reference>
<reference key="2">
    <citation type="journal article" date="2014" name="G3 (Bethesda)">
        <title>The reference genome sequence of Saccharomyces cerevisiae: Then and now.</title>
        <authorList>
            <person name="Engel S.R."/>
            <person name="Dietrich F.S."/>
            <person name="Fisk D.G."/>
            <person name="Binkley G."/>
            <person name="Balakrishnan R."/>
            <person name="Costanzo M.C."/>
            <person name="Dwight S.S."/>
            <person name="Hitz B.C."/>
            <person name="Karra K."/>
            <person name="Nash R.S."/>
            <person name="Weng S."/>
            <person name="Wong E.D."/>
            <person name="Lloyd P."/>
            <person name="Skrzypek M.S."/>
            <person name="Miyasato S.R."/>
            <person name="Simison M."/>
            <person name="Cherry J.M."/>
        </authorList>
    </citation>
    <scope>GENOME REANNOTATION</scope>
    <source>
        <strain>ATCC 204508 / S288c</strain>
    </source>
</reference>
<reference key="3">
    <citation type="journal article" date="2001" name="J. Biol. Chem.">
        <title>Cyclophilin A mediates Vid22p function in the import of fructose-1,6-bisphosphatase into Vid vesicles.</title>
        <authorList>
            <person name="Brown C.R."/>
            <person name="Cui D.-Y."/>
            <person name="Hung G.G.-C."/>
            <person name="Chiang H.-L."/>
        </authorList>
    </citation>
    <scope>FUNCTION</scope>
</reference>
<reference key="4">
    <citation type="journal article" date="2002" name="J. Cell Sci.">
        <title>Vid22p, a novel plasma membrane protein, is required for the fructose-1,6-bisphosphatase degradation pathway.</title>
        <authorList>
            <person name="Brown C.R."/>
            <person name="McCann J.A."/>
            <person name="Hung G.G.-C."/>
            <person name="Elco C.P."/>
            <person name="Chiang H.-L."/>
        </authorList>
    </citation>
    <scope>FUNCTION</scope>
    <scope>SUBCELLULAR LOCATION</scope>
    <scope>GLYCOSYLATION</scope>
</reference>
<reference key="5">
    <citation type="journal article" date="2003" name="Nature">
        <title>Global analysis of protein localization in budding yeast.</title>
        <authorList>
            <person name="Huh W.-K."/>
            <person name="Falvo J.V."/>
            <person name="Gerke L.C."/>
            <person name="Carroll A.S."/>
            <person name="Howson R.W."/>
            <person name="Weissman J.S."/>
            <person name="O'Shea E.K."/>
        </authorList>
    </citation>
    <scope>SUBCELLULAR LOCATION [LARGE SCALE ANALYSIS]</scope>
</reference>
<reference key="6">
    <citation type="journal article" date="2003" name="Nature">
        <title>Global analysis of protein expression in yeast.</title>
        <authorList>
            <person name="Ghaemmaghami S."/>
            <person name="Huh W.-K."/>
            <person name="Bower K."/>
            <person name="Howson R.W."/>
            <person name="Belle A."/>
            <person name="Dephoure N."/>
            <person name="O'Shea E.K."/>
            <person name="Weissman J.S."/>
        </authorList>
    </citation>
    <scope>LEVEL OF PROTEIN EXPRESSION [LARGE SCALE ANALYSIS]</scope>
</reference>
<proteinExistence type="evidence at protein level"/>
<organism>
    <name type="scientific">Saccharomyces cerevisiae (strain ATCC 204508 / S288c)</name>
    <name type="common">Baker's yeast</name>
    <dbReference type="NCBI Taxonomy" id="559292"/>
    <lineage>
        <taxon>Eukaryota</taxon>
        <taxon>Fungi</taxon>
        <taxon>Dikarya</taxon>
        <taxon>Ascomycota</taxon>
        <taxon>Saccharomycotina</taxon>
        <taxon>Saccharomycetes</taxon>
        <taxon>Saccharomycetales</taxon>
        <taxon>Saccharomycetaceae</taxon>
        <taxon>Saccharomyces</taxon>
    </lineage>
</organism>
<protein>
    <recommendedName>
        <fullName>Vacuolar import and degradation protein 22</fullName>
    </recommendedName>
</protein>
<keyword id="KW-1003">Cell membrane</keyword>
<keyword id="KW-0325">Glycoprotein</keyword>
<keyword id="KW-0472">Membrane</keyword>
<keyword id="KW-0479">Metal-binding</keyword>
<keyword id="KW-0539">Nucleus</keyword>
<keyword id="KW-0653">Protein transport</keyword>
<keyword id="KW-1185">Reference proteome</keyword>
<keyword id="KW-0812">Transmembrane</keyword>
<keyword id="KW-1133">Transmembrane helix</keyword>
<keyword id="KW-0813">Transport</keyword>
<keyword id="KW-0862">Zinc</keyword>
<keyword id="KW-0863">Zinc-finger</keyword>
<accession>Q05934</accession>
<accession>D6VZ10</accession>
<comment type="function">
    <text evidence="4 5">Has a role in the negative regulation of gluconeogenesis. Imports fructose-1,6-bisphosphatase (FBPase) into the intermediate vacuole import and degradation (Vid) vesicles. This is an indirect role and requires cyclophilin A.</text>
</comment>
<comment type="interaction">
    <interactant intactId="EBI-30350">
        <id>Q05934</id>
    </interactant>
    <interactant intactId="EBI-19005">
        <id>Q02457</id>
        <label>TBF1</label>
    </interactant>
    <organismsDiffer>false</organismsDiffer>
    <experiments>3</experiments>
</comment>
<comment type="subcellular location">
    <subcellularLocation>
        <location>Cell membrane</location>
        <topology>Single-pass membrane protein</topology>
    </subcellularLocation>
    <subcellularLocation>
        <location>Nucleus</location>
    </subcellularLocation>
</comment>
<comment type="PTM">
    <text evidence="5">Glycosylated.</text>
</comment>
<comment type="miscellaneous">
    <text evidence="6">Present with 2950 molecules/cell in log phase SD medium.</text>
</comment>
<comment type="similarity">
    <text evidence="7">Belongs to the VID22 family.</text>
</comment>
<sequence>MRAMDTQVQSAERGLVLPPMNSTVSSATAATTATNTDTDTDGDRDEERESLAEDGSEWVPAYMLTRDRSRYLGHFLGVDKMLEAVKCKYCGVIIRRQGNSISMAEASQTHLWSTHKIDPNANYYSGWTGVEAGSTFMVRPPLKNHQGGSATTNSIANLLEIDEDFLKRTREKEMALPLVQSLAIIIASENLPLSFVDNTAVRLLINQNANSLSFIDHDLILNAIRSIAYNLDRIIQRTALRNNSDLSLIIDKNYLLMDPTDRSNQLSNRLKNQLFEMQKINFFSLSHSVWNNTISILSIQYYDDFHSQVKTLPLIIQNLHEYNNDPKLSIPAQLLKISQELPGLQNTVISITLPRSQIVDLLNVMDSQPFFPNTYTNAKNYYHNCIISIINSAILPLFGTPKSADITHPRQSSFSKEPLTLLDSLIDLSNIDISNSIFSRINSFLDDLQSNSWQLDKFRSLCEKFGFEFVCSKFDLSRYSTATVSLQTFLNLRPIIEEYQSSIQIEKFNEIDFQIIDYLLITLNSINRILKFFTSSKSLNFTYVLFAIMSIEKHLLSTLGSLQFQRLIAPFETFLSKIQEFKTILFSDDMNLLAMFLCPAILFEREVLEYSFHTISLSEIVDKLSTSIFSLLKRFLNLHTIGNVNNSHNTSNHSNMNIHTDNQTNNINNRSGNNSDNNDNEHDNDNDNHSNSNTPASRIDIDPTGGENSVLPEQQPQNSNNNLSFGSLSDTHHLSDSTISKEIDSIFLQIIQEDLYDYLSTVNSIVPISYRSYCEQSNFIRDSGRFKKRIITEDSIIGELEQPMNFIEELLDIHVPVCNAFWSQYLDNDAGPIIRILFKIMQCQSSSSIRGEYSFLNDFIPRVHPDLTQEIIKIKLFNDQFVASKVDYDLDTLQTASQYLP</sequence>